<organism>
    <name type="scientific">Halobacterium salinarum (strain ATCC 700922 / JCM 11081 / NRC-1)</name>
    <name type="common">Halobacterium halobium</name>
    <dbReference type="NCBI Taxonomy" id="64091"/>
    <lineage>
        <taxon>Archaea</taxon>
        <taxon>Methanobacteriati</taxon>
        <taxon>Methanobacteriota</taxon>
        <taxon>Stenosarchaea group</taxon>
        <taxon>Halobacteria</taxon>
        <taxon>Halobacteriales</taxon>
        <taxon>Halobacteriaceae</taxon>
        <taxon>Halobacterium</taxon>
        <taxon>Halobacterium salinarum NRC-34001</taxon>
    </lineage>
</organism>
<proteinExistence type="inferred from homology"/>
<evidence type="ECO:0000255" key="1">
    <source>
        <dbReference type="HAMAP-Rule" id="MF_00087"/>
    </source>
</evidence>
<accession>Q9HP72</accession>
<dbReference type="EC" id="1.2.1.70" evidence="1"/>
<dbReference type="EMBL" id="AE004437">
    <property type="protein sequence ID" value="AAG19998.1"/>
    <property type="molecule type" value="Genomic_DNA"/>
</dbReference>
<dbReference type="PIR" id="B84329">
    <property type="entry name" value="B84329"/>
</dbReference>
<dbReference type="RefSeq" id="WP_010903296.1">
    <property type="nucleotide sequence ID" value="NC_002607.1"/>
</dbReference>
<dbReference type="SMR" id="Q9HP72"/>
<dbReference type="FunCoup" id="Q9HP72">
    <property type="interactions" value="78"/>
</dbReference>
<dbReference type="STRING" id="64091.VNG_1774G"/>
<dbReference type="PaxDb" id="64091-VNG_1774G"/>
<dbReference type="GeneID" id="89350006"/>
<dbReference type="KEGG" id="hal:VNG_1774G"/>
<dbReference type="PATRIC" id="fig|64091.14.peg.1353"/>
<dbReference type="HOGENOM" id="CLU_035113_0_1_2"/>
<dbReference type="InParanoid" id="Q9HP72"/>
<dbReference type="OrthoDB" id="4562at2157"/>
<dbReference type="PhylomeDB" id="Q9HP72"/>
<dbReference type="UniPathway" id="UPA00251">
    <property type="reaction ID" value="UER00316"/>
</dbReference>
<dbReference type="Proteomes" id="UP000000554">
    <property type="component" value="Chromosome"/>
</dbReference>
<dbReference type="GO" id="GO:0008883">
    <property type="term" value="F:glutamyl-tRNA reductase activity"/>
    <property type="evidence" value="ECO:0007669"/>
    <property type="project" value="UniProtKB-UniRule"/>
</dbReference>
<dbReference type="GO" id="GO:0050661">
    <property type="term" value="F:NADP binding"/>
    <property type="evidence" value="ECO:0007669"/>
    <property type="project" value="InterPro"/>
</dbReference>
<dbReference type="GO" id="GO:0006782">
    <property type="term" value="P:protoporphyrinogen IX biosynthetic process"/>
    <property type="evidence" value="ECO:0007669"/>
    <property type="project" value="UniProtKB-UniRule"/>
</dbReference>
<dbReference type="CDD" id="cd05213">
    <property type="entry name" value="NAD_bind_Glutamyl_tRNA_reduct"/>
    <property type="match status" value="1"/>
</dbReference>
<dbReference type="FunFam" id="3.30.460.30:FF:000001">
    <property type="entry name" value="Glutamyl-tRNA reductase"/>
    <property type="match status" value="1"/>
</dbReference>
<dbReference type="Gene3D" id="3.30.460.30">
    <property type="entry name" value="Glutamyl-tRNA reductase, N-terminal domain"/>
    <property type="match status" value="1"/>
</dbReference>
<dbReference type="Gene3D" id="3.40.50.720">
    <property type="entry name" value="NAD(P)-binding Rossmann-like Domain"/>
    <property type="match status" value="1"/>
</dbReference>
<dbReference type="HAMAP" id="MF_00087">
    <property type="entry name" value="Glu_tRNA_reductase"/>
    <property type="match status" value="1"/>
</dbReference>
<dbReference type="InterPro" id="IPR000343">
    <property type="entry name" value="4pyrrol_synth_GluRdtase"/>
</dbReference>
<dbReference type="InterPro" id="IPR015896">
    <property type="entry name" value="4pyrrol_synth_GluRdtase_dimer"/>
</dbReference>
<dbReference type="InterPro" id="IPR015895">
    <property type="entry name" value="4pyrrol_synth_GluRdtase_N"/>
</dbReference>
<dbReference type="InterPro" id="IPR018214">
    <property type="entry name" value="GluRdtase_CS"/>
</dbReference>
<dbReference type="InterPro" id="IPR036453">
    <property type="entry name" value="GluRdtase_dimer_dom_sf"/>
</dbReference>
<dbReference type="InterPro" id="IPR036343">
    <property type="entry name" value="GluRdtase_N_sf"/>
</dbReference>
<dbReference type="InterPro" id="IPR036291">
    <property type="entry name" value="NAD(P)-bd_dom_sf"/>
</dbReference>
<dbReference type="InterPro" id="IPR006151">
    <property type="entry name" value="Shikm_DH/Glu-tRNA_Rdtase"/>
</dbReference>
<dbReference type="NCBIfam" id="TIGR01035">
    <property type="entry name" value="hemA"/>
    <property type="match status" value="1"/>
</dbReference>
<dbReference type="PANTHER" id="PTHR43013">
    <property type="entry name" value="GLUTAMYL-TRNA REDUCTASE"/>
    <property type="match status" value="1"/>
</dbReference>
<dbReference type="PANTHER" id="PTHR43013:SF1">
    <property type="entry name" value="GLUTAMYL-TRNA REDUCTASE"/>
    <property type="match status" value="1"/>
</dbReference>
<dbReference type="Pfam" id="PF00745">
    <property type="entry name" value="GlutR_dimer"/>
    <property type="match status" value="1"/>
</dbReference>
<dbReference type="Pfam" id="PF05201">
    <property type="entry name" value="GlutR_N"/>
    <property type="match status" value="1"/>
</dbReference>
<dbReference type="Pfam" id="PF01488">
    <property type="entry name" value="Shikimate_DH"/>
    <property type="match status" value="1"/>
</dbReference>
<dbReference type="PIRSF" id="PIRSF000445">
    <property type="entry name" value="4pyrrol_synth_GluRdtase"/>
    <property type="match status" value="1"/>
</dbReference>
<dbReference type="SUPFAM" id="SSF69742">
    <property type="entry name" value="Glutamyl tRNA-reductase catalytic, N-terminal domain"/>
    <property type="match status" value="1"/>
</dbReference>
<dbReference type="SUPFAM" id="SSF69075">
    <property type="entry name" value="Glutamyl tRNA-reductase dimerization domain"/>
    <property type="match status" value="1"/>
</dbReference>
<dbReference type="SUPFAM" id="SSF51735">
    <property type="entry name" value="NAD(P)-binding Rossmann-fold domains"/>
    <property type="match status" value="1"/>
</dbReference>
<dbReference type="PROSITE" id="PS00747">
    <property type="entry name" value="GLUTR"/>
    <property type="match status" value="1"/>
</dbReference>
<name>HEM1_HALSA</name>
<reference key="1">
    <citation type="journal article" date="2000" name="Proc. Natl. Acad. Sci. U.S.A.">
        <title>Genome sequence of Halobacterium species NRC-1.</title>
        <authorList>
            <person name="Ng W.V."/>
            <person name="Kennedy S.P."/>
            <person name="Mahairas G.G."/>
            <person name="Berquist B."/>
            <person name="Pan M."/>
            <person name="Shukla H.D."/>
            <person name="Lasky S.R."/>
            <person name="Baliga N.S."/>
            <person name="Thorsson V."/>
            <person name="Sbrogna J."/>
            <person name="Swartzell S."/>
            <person name="Weir D."/>
            <person name="Hall J."/>
            <person name="Dahl T.A."/>
            <person name="Welti R."/>
            <person name="Goo Y.A."/>
            <person name="Leithauser B."/>
            <person name="Keller K."/>
            <person name="Cruz R."/>
            <person name="Danson M.J."/>
            <person name="Hough D.W."/>
            <person name="Maddocks D.G."/>
            <person name="Jablonski P.E."/>
            <person name="Krebs M.P."/>
            <person name="Angevine C.M."/>
            <person name="Dale H."/>
            <person name="Isenbarger T.A."/>
            <person name="Peck R.F."/>
            <person name="Pohlschroder M."/>
            <person name="Spudich J.L."/>
            <person name="Jung K.-H."/>
            <person name="Alam M."/>
            <person name="Freitas T."/>
            <person name="Hou S."/>
            <person name="Daniels C.J."/>
            <person name="Dennis P.P."/>
            <person name="Omer A.D."/>
            <person name="Ebhardt H."/>
            <person name="Lowe T.M."/>
            <person name="Liang P."/>
            <person name="Riley M."/>
            <person name="Hood L."/>
            <person name="DasSarma S."/>
        </authorList>
    </citation>
    <scope>NUCLEOTIDE SEQUENCE [LARGE SCALE GENOMIC DNA]</scope>
    <source>
        <strain>ATCC 700922 / JCM 11081 / NRC-1</strain>
    </source>
</reference>
<gene>
    <name evidence="1" type="primary">hemA</name>
    <name type="ordered locus">VNG_1774G</name>
</gene>
<keyword id="KW-0521">NADP</keyword>
<keyword id="KW-0560">Oxidoreductase</keyword>
<keyword id="KW-0627">Porphyrin biosynthesis</keyword>
<keyword id="KW-1185">Reference proteome</keyword>
<comment type="function">
    <text evidence="1">Catalyzes the NADPH-dependent reduction of glutamyl-tRNA(Glu) to glutamate 1-semialdehyde (GSA).</text>
</comment>
<comment type="catalytic activity">
    <reaction evidence="1">
        <text>(S)-4-amino-5-oxopentanoate + tRNA(Glu) + NADP(+) = L-glutamyl-tRNA(Glu) + NADPH + H(+)</text>
        <dbReference type="Rhea" id="RHEA:12344"/>
        <dbReference type="Rhea" id="RHEA-COMP:9663"/>
        <dbReference type="Rhea" id="RHEA-COMP:9680"/>
        <dbReference type="ChEBI" id="CHEBI:15378"/>
        <dbReference type="ChEBI" id="CHEBI:57501"/>
        <dbReference type="ChEBI" id="CHEBI:57783"/>
        <dbReference type="ChEBI" id="CHEBI:58349"/>
        <dbReference type="ChEBI" id="CHEBI:78442"/>
        <dbReference type="ChEBI" id="CHEBI:78520"/>
        <dbReference type="EC" id="1.2.1.70"/>
    </reaction>
</comment>
<comment type="pathway">
    <text evidence="1">Porphyrin-containing compound metabolism; protoporphyrin-IX biosynthesis; 5-aminolevulinate from L-glutamyl-tRNA(Glu): step 1/2.</text>
</comment>
<comment type="subunit">
    <text evidence="1">Homodimer.</text>
</comment>
<comment type="domain">
    <text evidence="1">Possesses an unusual extended V-shaped dimeric structure with each monomer consisting of three distinct domains arranged along a curved 'spinal' alpha-helix. The N-terminal catalytic domain specifically recognizes the glutamate moiety of the substrate. The second domain is the NADPH-binding domain, and the third C-terminal domain is responsible for dimerization.</text>
</comment>
<comment type="miscellaneous">
    <text evidence="1">During catalysis, the active site Cys acts as a nucleophile attacking the alpha-carbonyl group of tRNA-bound glutamate with the formation of a thioester intermediate between enzyme and glutamate, and the concomitant release of tRNA(Glu). The thioester intermediate is finally reduced by direct hydride transfer from NADPH, to form the product GSA.</text>
</comment>
<comment type="similarity">
    <text evidence="1">Belongs to the glutamyl-tRNA reductase family.</text>
</comment>
<sequence>MNGNTGVVSGVRVSHETASLDELAAASAASTEAALDALLEQPPVEEAFVLQTCHRVEAYVVTADQASGRRALGGAGFNPAGGGAISMGHEDSLRHLLRVAAGLESLVVGEDQILGQLRDAYDAAKDAGGIDHVLREAVTKAMHVGERARTETAINEGATSLGTAAVRLAERKTQLADARAVVVGAGEMGALAAKAFASATVAEIVIANRTPARAVRVADMVSVPAEATTLADARGRLDAADVVVTATGSPEHVLPASAFADAGDTVVVDLAQPRDVAPGAGGHDGVAVHDLDDLEAVTAATRERREDAAREVEAMIETEFERLLTQYKRKRADEVIARMYESADRLKSREVQTAVHRLEAESGSLSADEREVVESMADALVSQLLAAPTKSLRDAAAEDDWSTIATALELFNPEFEDGMPFDASRGGDAASAESED</sequence>
<protein>
    <recommendedName>
        <fullName evidence="1">Glutamyl-tRNA reductase</fullName>
        <shortName evidence="1">GluTR</shortName>
        <ecNumber evidence="1">1.2.1.70</ecNumber>
    </recommendedName>
</protein>
<feature type="chain" id="PRO_0000114099" description="Glutamyl-tRNA reductase">
    <location>
        <begin position="1"/>
        <end position="436"/>
    </location>
</feature>
<feature type="active site" description="Nucleophile" evidence="1">
    <location>
        <position position="53"/>
    </location>
</feature>
<feature type="binding site" evidence="1">
    <location>
        <begin position="52"/>
        <end position="55"/>
    </location>
    <ligand>
        <name>substrate</name>
    </ligand>
</feature>
<feature type="binding site" evidence="1">
    <location>
        <position position="105"/>
    </location>
    <ligand>
        <name>substrate</name>
    </ligand>
</feature>
<feature type="binding site" evidence="1">
    <location>
        <begin position="110"/>
        <end position="112"/>
    </location>
    <ligand>
        <name>substrate</name>
    </ligand>
</feature>
<feature type="binding site" evidence="1">
    <location>
        <position position="116"/>
    </location>
    <ligand>
        <name>substrate</name>
    </ligand>
</feature>
<feature type="binding site" evidence="1">
    <location>
        <begin position="184"/>
        <end position="189"/>
    </location>
    <ligand>
        <name>NADP(+)</name>
        <dbReference type="ChEBI" id="CHEBI:58349"/>
    </ligand>
</feature>
<feature type="site" description="Important for activity" evidence="1">
    <location>
        <position position="95"/>
    </location>
</feature>